<evidence type="ECO:0000250" key="1"/>
<evidence type="ECO:0000305" key="2"/>
<proteinExistence type="inferred from homology"/>
<organism>
    <name type="scientific">Mesorhizobium japonicum (strain LMG 29417 / CECT 9101 / MAFF 303099)</name>
    <name type="common">Mesorhizobium loti (strain MAFF 303099)</name>
    <dbReference type="NCBI Taxonomy" id="266835"/>
    <lineage>
        <taxon>Bacteria</taxon>
        <taxon>Pseudomonadati</taxon>
        <taxon>Pseudomonadota</taxon>
        <taxon>Alphaproteobacteria</taxon>
        <taxon>Hyphomicrobiales</taxon>
        <taxon>Phyllobacteriaceae</taxon>
        <taxon>Mesorhizobium</taxon>
    </lineage>
</organism>
<name>SUHB_RHILO</name>
<keyword id="KW-0378">Hydrolase</keyword>
<keyword id="KW-0460">Magnesium</keyword>
<keyword id="KW-0479">Metal-binding</keyword>
<feature type="chain" id="PRO_0000142570" description="Inositol-1-monophosphatase">
    <location>
        <begin position="1"/>
        <end position="266"/>
    </location>
</feature>
<feature type="binding site" evidence="1">
    <location>
        <position position="69"/>
    </location>
    <ligand>
        <name>Mg(2+)</name>
        <dbReference type="ChEBI" id="CHEBI:18420"/>
        <label>1</label>
    </ligand>
</feature>
<feature type="binding site" evidence="1">
    <location>
        <position position="69"/>
    </location>
    <ligand>
        <name>substrate</name>
    </ligand>
</feature>
<feature type="binding site" evidence="1">
    <location>
        <position position="86"/>
    </location>
    <ligand>
        <name>Mg(2+)</name>
        <dbReference type="ChEBI" id="CHEBI:18420"/>
        <label>1</label>
    </ligand>
</feature>
<feature type="binding site" evidence="1">
    <location>
        <position position="86"/>
    </location>
    <ligand>
        <name>Mg(2+)</name>
        <dbReference type="ChEBI" id="CHEBI:18420"/>
        <label>2</label>
    </ligand>
</feature>
<feature type="binding site" evidence="1">
    <location>
        <begin position="88"/>
        <end position="91"/>
    </location>
    <ligand>
        <name>substrate</name>
    </ligand>
</feature>
<feature type="binding site" evidence="1">
    <location>
        <position position="88"/>
    </location>
    <ligand>
        <name>Mg(2+)</name>
        <dbReference type="ChEBI" id="CHEBI:18420"/>
        <label>1</label>
    </ligand>
</feature>
<feature type="binding site" evidence="1">
    <location>
        <position position="89"/>
    </location>
    <ligand>
        <name>Mg(2+)</name>
        <dbReference type="ChEBI" id="CHEBI:18420"/>
        <label>2</label>
    </ligand>
</feature>
<feature type="binding site" evidence="1">
    <location>
        <position position="185"/>
    </location>
    <ligand>
        <name>substrate</name>
    </ligand>
</feature>
<feature type="binding site" evidence="1">
    <location>
        <position position="214"/>
    </location>
    <ligand>
        <name>Mg(2+)</name>
        <dbReference type="ChEBI" id="CHEBI:18420"/>
        <label>2</label>
    </ligand>
</feature>
<feature type="binding site" evidence="1">
    <location>
        <position position="214"/>
    </location>
    <ligand>
        <name>substrate</name>
    </ligand>
</feature>
<gene>
    <name type="primary">suhB</name>
    <name type="ordered locus">mlr3921</name>
</gene>
<protein>
    <recommendedName>
        <fullName>Inositol-1-monophosphatase</fullName>
        <shortName>I-1-Pase</shortName>
        <shortName>IMPase</shortName>
        <shortName>Inositol-1-phosphatase</shortName>
        <ecNumber>3.1.3.25</ecNumber>
    </recommendedName>
</protein>
<dbReference type="EC" id="3.1.3.25"/>
<dbReference type="EMBL" id="BA000012">
    <property type="protein sequence ID" value="BAB50708.1"/>
    <property type="molecule type" value="Genomic_DNA"/>
</dbReference>
<dbReference type="RefSeq" id="WP_010912051.1">
    <property type="nucleotide sequence ID" value="NC_002678.2"/>
</dbReference>
<dbReference type="SMR" id="Q98F59"/>
<dbReference type="KEGG" id="mlo:mlr3921"/>
<dbReference type="eggNOG" id="COG0483">
    <property type="taxonomic scope" value="Bacteria"/>
</dbReference>
<dbReference type="HOGENOM" id="CLU_044118_0_0_5"/>
<dbReference type="Proteomes" id="UP000000552">
    <property type="component" value="Chromosome"/>
</dbReference>
<dbReference type="GO" id="GO:0008934">
    <property type="term" value="F:inositol monophosphate 1-phosphatase activity"/>
    <property type="evidence" value="ECO:0007669"/>
    <property type="project" value="InterPro"/>
</dbReference>
<dbReference type="GO" id="GO:0046872">
    <property type="term" value="F:metal ion binding"/>
    <property type="evidence" value="ECO:0007669"/>
    <property type="project" value="UniProtKB-KW"/>
</dbReference>
<dbReference type="GO" id="GO:0006020">
    <property type="term" value="P:inositol metabolic process"/>
    <property type="evidence" value="ECO:0007669"/>
    <property type="project" value="TreeGrafter"/>
</dbReference>
<dbReference type="GO" id="GO:0046854">
    <property type="term" value="P:phosphatidylinositol phosphate biosynthetic process"/>
    <property type="evidence" value="ECO:0007669"/>
    <property type="project" value="InterPro"/>
</dbReference>
<dbReference type="GO" id="GO:0007165">
    <property type="term" value="P:signal transduction"/>
    <property type="evidence" value="ECO:0007669"/>
    <property type="project" value="TreeGrafter"/>
</dbReference>
<dbReference type="CDD" id="cd01639">
    <property type="entry name" value="IMPase"/>
    <property type="match status" value="1"/>
</dbReference>
<dbReference type="FunFam" id="3.40.190.80:FF:000020">
    <property type="entry name" value="Fructose-1,6-bisphosphatase/inositol-1-monophosphatase"/>
    <property type="match status" value="1"/>
</dbReference>
<dbReference type="FunFam" id="3.30.540.10:FF:000003">
    <property type="entry name" value="Inositol-1-monophosphatase"/>
    <property type="match status" value="1"/>
</dbReference>
<dbReference type="Gene3D" id="3.40.190.80">
    <property type="match status" value="1"/>
</dbReference>
<dbReference type="Gene3D" id="3.30.540.10">
    <property type="entry name" value="Fructose-1,6-Bisphosphatase, subunit A, domain 1"/>
    <property type="match status" value="1"/>
</dbReference>
<dbReference type="InterPro" id="IPR033942">
    <property type="entry name" value="IMPase"/>
</dbReference>
<dbReference type="InterPro" id="IPR020583">
    <property type="entry name" value="Inositol_monoP_metal-BS"/>
</dbReference>
<dbReference type="InterPro" id="IPR000760">
    <property type="entry name" value="Inositol_monophosphatase-like"/>
</dbReference>
<dbReference type="InterPro" id="IPR020550">
    <property type="entry name" value="Inositol_monophosphatase_CS"/>
</dbReference>
<dbReference type="InterPro" id="IPR022337">
    <property type="entry name" value="Inositol_monophosphatase_SuhB"/>
</dbReference>
<dbReference type="PANTHER" id="PTHR20854">
    <property type="entry name" value="INOSITOL MONOPHOSPHATASE"/>
    <property type="match status" value="1"/>
</dbReference>
<dbReference type="PANTHER" id="PTHR20854:SF4">
    <property type="entry name" value="INOSITOL-1-MONOPHOSPHATASE-RELATED"/>
    <property type="match status" value="1"/>
</dbReference>
<dbReference type="Pfam" id="PF00459">
    <property type="entry name" value="Inositol_P"/>
    <property type="match status" value="1"/>
</dbReference>
<dbReference type="PRINTS" id="PR00377">
    <property type="entry name" value="IMPHPHTASES"/>
</dbReference>
<dbReference type="PRINTS" id="PR01959">
    <property type="entry name" value="SBIMPHPHTASE"/>
</dbReference>
<dbReference type="SUPFAM" id="SSF56655">
    <property type="entry name" value="Carbohydrate phosphatase"/>
    <property type="match status" value="1"/>
</dbReference>
<dbReference type="PROSITE" id="PS00629">
    <property type="entry name" value="IMP_1"/>
    <property type="match status" value="1"/>
</dbReference>
<dbReference type="PROSITE" id="PS00630">
    <property type="entry name" value="IMP_2"/>
    <property type="match status" value="1"/>
</dbReference>
<reference key="1">
    <citation type="journal article" date="2000" name="DNA Res.">
        <title>Complete genome structure of the nitrogen-fixing symbiotic bacterium Mesorhizobium loti.</title>
        <authorList>
            <person name="Kaneko T."/>
            <person name="Nakamura Y."/>
            <person name="Sato S."/>
            <person name="Asamizu E."/>
            <person name="Kato T."/>
            <person name="Sasamoto S."/>
            <person name="Watanabe A."/>
            <person name="Idesawa K."/>
            <person name="Ishikawa A."/>
            <person name="Kawashima K."/>
            <person name="Kimura T."/>
            <person name="Kishida Y."/>
            <person name="Kiyokawa C."/>
            <person name="Kohara M."/>
            <person name="Matsumoto M."/>
            <person name="Matsuno A."/>
            <person name="Mochizuki Y."/>
            <person name="Nakayama S."/>
            <person name="Nakazaki N."/>
            <person name="Shimpo S."/>
            <person name="Sugimoto M."/>
            <person name="Takeuchi C."/>
            <person name="Yamada M."/>
            <person name="Tabata S."/>
        </authorList>
    </citation>
    <scope>NUCLEOTIDE SEQUENCE [LARGE SCALE GENOMIC DNA]</scope>
    <source>
        <strain>LMG 29417 / CECT 9101 / MAFF 303099</strain>
    </source>
</reference>
<accession>Q98F59</accession>
<sequence>MARSALLNVMVQAAMKAGRSLSRDFGEVQNLQVSLKGPGDYVSQADRKAEDIIFAELSKARPGYGFLMEERGAVEGEDSQHRWIVDPLDGTTNFLHGIPLFAVSIALERQGQIVAGVIYNPAMDELYTTERGGGAFMNDRRLRVAGRIKLVDTVIGCGMPHLGRGHHGNFLVELRNVMAEVSGVRRLGSAALDLAYVAAGRMDGFWETGLSAWDIAAGLLLIREAGGFVSDMDGGQDMLDNGSVVAGNEVIQRALLKAVKKPLSAR</sequence>
<comment type="catalytic activity">
    <reaction>
        <text>a myo-inositol phosphate + H2O = myo-inositol + phosphate</text>
        <dbReference type="Rhea" id="RHEA:24056"/>
        <dbReference type="ChEBI" id="CHEBI:15377"/>
        <dbReference type="ChEBI" id="CHEBI:17268"/>
        <dbReference type="ChEBI" id="CHEBI:43474"/>
        <dbReference type="ChEBI" id="CHEBI:84139"/>
        <dbReference type="EC" id="3.1.3.25"/>
    </reaction>
</comment>
<comment type="cofactor">
    <cofactor evidence="1">
        <name>Mg(2+)</name>
        <dbReference type="ChEBI" id="CHEBI:18420"/>
    </cofactor>
</comment>
<comment type="similarity">
    <text evidence="2">Belongs to the inositol monophosphatase superfamily.</text>
</comment>